<evidence type="ECO:0000255" key="1">
    <source>
        <dbReference type="HAMAP-Rule" id="MF_00661"/>
    </source>
</evidence>
<evidence type="ECO:0000256" key="2">
    <source>
        <dbReference type="SAM" id="MobiDB-lite"/>
    </source>
</evidence>
<gene>
    <name evidence="1" type="primary">rhlB</name>
    <name type="ordered locus">Spea_0399</name>
</gene>
<organism>
    <name type="scientific">Shewanella pealeana (strain ATCC 700345 / ANG-SQ1)</name>
    <dbReference type="NCBI Taxonomy" id="398579"/>
    <lineage>
        <taxon>Bacteria</taxon>
        <taxon>Pseudomonadati</taxon>
        <taxon>Pseudomonadota</taxon>
        <taxon>Gammaproteobacteria</taxon>
        <taxon>Alteromonadales</taxon>
        <taxon>Shewanellaceae</taxon>
        <taxon>Shewanella</taxon>
    </lineage>
</organism>
<feature type="chain" id="PRO_1000082864" description="ATP-dependent RNA helicase RhlB">
    <location>
        <begin position="1"/>
        <end position="436"/>
    </location>
</feature>
<feature type="domain" description="Helicase ATP-binding" evidence="1">
    <location>
        <begin position="40"/>
        <end position="219"/>
    </location>
</feature>
<feature type="domain" description="Helicase C-terminal" evidence="1">
    <location>
        <begin position="243"/>
        <end position="390"/>
    </location>
</feature>
<feature type="region of interest" description="Disordered" evidence="2">
    <location>
        <begin position="392"/>
        <end position="436"/>
    </location>
</feature>
<feature type="short sequence motif" description="Q motif">
    <location>
        <begin position="9"/>
        <end position="37"/>
    </location>
</feature>
<feature type="short sequence motif" description="DEAD box">
    <location>
        <begin position="165"/>
        <end position="168"/>
    </location>
</feature>
<feature type="compositionally biased region" description="Basic residues" evidence="2">
    <location>
        <begin position="425"/>
        <end position="436"/>
    </location>
</feature>
<feature type="binding site" evidence="1">
    <location>
        <begin position="53"/>
        <end position="60"/>
    </location>
    <ligand>
        <name>ATP</name>
        <dbReference type="ChEBI" id="CHEBI:30616"/>
    </ligand>
</feature>
<comment type="function">
    <text evidence="1">DEAD-box RNA helicase involved in RNA degradation. Has RNA-dependent ATPase activity and unwinds double-stranded RNA.</text>
</comment>
<comment type="catalytic activity">
    <reaction evidence="1">
        <text>ATP + H2O = ADP + phosphate + H(+)</text>
        <dbReference type="Rhea" id="RHEA:13065"/>
        <dbReference type="ChEBI" id="CHEBI:15377"/>
        <dbReference type="ChEBI" id="CHEBI:15378"/>
        <dbReference type="ChEBI" id="CHEBI:30616"/>
        <dbReference type="ChEBI" id="CHEBI:43474"/>
        <dbReference type="ChEBI" id="CHEBI:456216"/>
        <dbReference type="EC" id="3.6.4.13"/>
    </reaction>
</comment>
<comment type="subunit">
    <text evidence="1">Component of the RNA degradosome, which is a multiprotein complex involved in RNA processing and mRNA degradation.</text>
</comment>
<comment type="subcellular location">
    <subcellularLocation>
        <location evidence="1">Cytoplasm</location>
    </subcellularLocation>
</comment>
<comment type="similarity">
    <text evidence="1">Belongs to the DEAD box helicase family. RhlB subfamily.</text>
</comment>
<name>RHLB_SHEPA</name>
<proteinExistence type="inferred from homology"/>
<dbReference type="EC" id="3.6.4.13" evidence="1"/>
<dbReference type="EMBL" id="CP000851">
    <property type="protein sequence ID" value="ABV85727.1"/>
    <property type="molecule type" value="Genomic_DNA"/>
</dbReference>
<dbReference type="RefSeq" id="WP_012153668.1">
    <property type="nucleotide sequence ID" value="NC_009901.1"/>
</dbReference>
<dbReference type="SMR" id="A8GZJ0"/>
<dbReference type="STRING" id="398579.Spea_0399"/>
<dbReference type="KEGG" id="spl:Spea_0399"/>
<dbReference type="eggNOG" id="COG0513">
    <property type="taxonomic scope" value="Bacteria"/>
</dbReference>
<dbReference type="HOGENOM" id="CLU_003041_28_3_6"/>
<dbReference type="OrthoDB" id="9805696at2"/>
<dbReference type="Proteomes" id="UP000002608">
    <property type="component" value="Chromosome"/>
</dbReference>
<dbReference type="GO" id="GO:0005829">
    <property type="term" value="C:cytosol"/>
    <property type="evidence" value="ECO:0007669"/>
    <property type="project" value="TreeGrafter"/>
</dbReference>
<dbReference type="GO" id="GO:0005524">
    <property type="term" value="F:ATP binding"/>
    <property type="evidence" value="ECO:0007669"/>
    <property type="project" value="UniProtKB-UniRule"/>
</dbReference>
<dbReference type="GO" id="GO:0016887">
    <property type="term" value="F:ATP hydrolysis activity"/>
    <property type="evidence" value="ECO:0007669"/>
    <property type="project" value="RHEA"/>
</dbReference>
<dbReference type="GO" id="GO:0003723">
    <property type="term" value="F:RNA binding"/>
    <property type="evidence" value="ECO:0007669"/>
    <property type="project" value="UniProtKB-UniRule"/>
</dbReference>
<dbReference type="GO" id="GO:0003724">
    <property type="term" value="F:RNA helicase activity"/>
    <property type="evidence" value="ECO:0007669"/>
    <property type="project" value="UniProtKB-UniRule"/>
</dbReference>
<dbReference type="GO" id="GO:0006401">
    <property type="term" value="P:RNA catabolic process"/>
    <property type="evidence" value="ECO:0007669"/>
    <property type="project" value="UniProtKB-UniRule"/>
</dbReference>
<dbReference type="CDD" id="cd00268">
    <property type="entry name" value="DEADc"/>
    <property type="match status" value="1"/>
</dbReference>
<dbReference type="CDD" id="cd18787">
    <property type="entry name" value="SF2_C_DEAD"/>
    <property type="match status" value="1"/>
</dbReference>
<dbReference type="FunFam" id="3.40.50.300:FF:000312">
    <property type="entry name" value="ATP-dependent RNA helicase RhlB"/>
    <property type="match status" value="1"/>
</dbReference>
<dbReference type="Gene3D" id="3.40.50.300">
    <property type="entry name" value="P-loop containing nucleotide triphosphate hydrolases"/>
    <property type="match status" value="2"/>
</dbReference>
<dbReference type="HAMAP" id="MF_00661">
    <property type="entry name" value="DEAD_helicase_RhlB"/>
    <property type="match status" value="1"/>
</dbReference>
<dbReference type="InterPro" id="IPR011545">
    <property type="entry name" value="DEAD/DEAH_box_helicase_dom"/>
</dbReference>
<dbReference type="InterPro" id="IPR050079">
    <property type="entry name" value="DEAD_box_RNA_helicase"/>
</dbReference>
<dbReference type="InterPro" id="IPR014001">
    <property type="entry name" value="Helicase_ATP-bd"/>
</dbReference>
<dbReference type="InterPro" id="IPR001650">
    <property type="entry name" value="Helicase_C-like"/>
</dbReference>
<dbReference type="InterPro" id="IPR027417">
    <property type="entry name" value="P-loop_NTPase"/>
</dbReference>
<dbReference type="InterPro" id="IPR000629">
    <property type="entry name" value="RNA-helicase_DEAD-box_CS"/>
</dbReference>
<dbReference type="InterPro" id="IPR023554">
    <property type="entry name" value="RNA_helicase_ATP-dep_RhlB"/>
</dbReference>
<dbReference type="InterPro" id="IPR014014">
    <property type="entry name" value="RNA_helicase_DEAD_Q_motif"/>
</dbReference>
<dbReference type="NCBIfam" id="NF003419">
    <property type="entry name" value="PRK04837.1"/>
    <property type="match status" value="1"/>
</dbReference>
<dbReference type="PANTHER" id="PTHR47959:SF10">
    <property type="entry name" value="ATP-DEPENDENT RNA HELICASE RHLB"/>
    <property type="match status" value="1"/>
</dbReference>
<dbReference type="PANTHER" id="PTHR47959">
    <property type="entry name" value="ATP-DEPENDENT RNA HELICASE RHLE-RELATED"/>
    <property type="match status" value="1"/>
</dbReference>
<dbReference type="Pfam" id="PF00270">
    <property type="entry name" value="DEAD"/>
    <property type="match status" value="1"/>
</dbReference>
<dbReference type="Pfam" id="PF00271">
    <property type="entry name" value="Helicase_C"/>
    <property type="match status" value="1"/>
</dbReference>
<dbReference type="SMART" id="SM00487">
    <property type="entry name" value="DEXDc"/>
    <property type="match status" value="1"/>
</dbReference>
<dbReference type="SMART" id="SM00490">
    <property type="entry name" value="HELICc"/>
    <property type="match status" value="1"/>
</dbReference>
<dbReference type="SUPFAM" id="SSF52540">
    <property type="entry name" value="P-loop containing nucleoside triphosphate hydrolases"/>
    <property type="match status" value="1"/>
</dbReference>
<dbReference type="PROSITE" id="PS00039">
    <property type="entry name" value="DEAD_ATP_HELICASE"/>
    <property type="match status" value="1"/>
</dbReference>
<dbReference type="PROSITE" id="PS51192">
    <property type="entry name" value="HELICASE_ATP_BIND_1"/>
    <property type="match status" value="1"/>
</dbReference>
<dbReference type="PROSITE" id="PS51194">
    <property type="entry name" value="HELICASE_CTER"/>
    <property type="match status" value="1"/>
</dbReference>
<dbReference type="PROSITE" id="PS51195">
    <property type="entry name" value="Q_MOTIF"/>
    <property type="match status" value="1"/>
</dbReference>
<keyword id="KW-0067">ATP-binding</keyword>
<keyword id="KW-0963">Cytoplasm</keyword>
<keyword id="KW-0347">Helicase</keyword>
<keyword id="KW-0378">Hydrolase</keyword>
<keyword id="KW-0547">Nucleotide-binding</keyword>
<keyword id="KW-1185">Reference proteome</keyword>
<keyword id="KW-0694">RNA-binding</keyword>
<protein>
    <recommendedName>
        <fullName evidence="1">ATP-dependent RNA helicase RhlB</fullName>
        <ecNumber evidence="1">3.6.4.13</ecNumber>
    </recommendedName>
</protein>
<sequence>MSETHLSTQKFADFPLHKEVHQALNEAGFEFCTPIQALSLPILLEKKDIAGQAQTGTGKTLAFLVATFNHLLSTPIPAERQLNQPRAIIMAPTRELAIQIAKDANLLAKHTGLKVGIVYGGEGYEVQRKVLDKGVDILIGTTGRIIDYVRQGVINVSCIQAVVLDEADRMFDLGFIKDIRFLFRRMPDAKSRLNMLFSATLSMKVQELAYDHMNEPEKVEIAPNEKTSKNIKEEIFYPSMEEKMPLLLSLLEEDWPEKAIVFSNTKHSCEKVWSWLEGDGHRAGLLTGDVPQKKRLRILEQFTKGDIDILVATDVAARGLHISDVSHVYNYDLPDDCEDYVHRIGRTGRAGQKGVSVSFACEEYALNLPAIESYIQHSIPVTSYDSDALLDDIPPPVRIHRKPSTHTRNTRDRSSGRPQGGQRNGPRRHDKTRRHS</sequence>
<reference key="1">
    <citation type="submission" date="2007-10" db="EMBL/GenBank/DDBJ databases">
        <title>Complete sequence of Shewanella pealeana ATCC 700345.</title>
        <authorList>
            <consortium name="US DOE Joint Genome Institute"/>
            <person name="Copeland A."/>
            <person name="Lucas S."/>
            <person name="Lapidus A."/>
            <person name="Barry K."/>
            <person name="Glavina del Rio T."/>
            <person name="Dalin E."/>
            <person name="Tice H."/>
            <person name="Pitluck S."/>
            <person name="Chertkov O."/>
            <person name="Brettin T."/>
            <person name="Bruce D."/>
            <person name="Detter J.C."/>
            <person name="Han C."/>
            <person name="Schmutz J."/>
            <person name="Larimer F."/>
            <person name="Land M."/>
            <person name="Hauser L."/>
            <person name="Kyrpides N."/>
            <person name="Kim E."/>
            <person name="Zhao J.-S.Z."/>
            <person name="Manno D."/>
            <person name="Hawari J."/>
            <person name="Richardson P."/>
        </authorList>
    </citation>
    <scope>NUCLEOTIDE SEQUENCE [LARGE SCALE GENOMIC DNA]</scope>
    <source>
        <strain>ATCC 700345 / ANG-SQ1</strain>
    </source>
</reference>
<accession>A8GZJ0</accession>